<protein>
    <recommendedName>
        <fullName evidence="3">Large envelope protein</fullName>
    </recommendedName>
    <alternativeName>
        <fullName evidence="3">L glycoprotein</fullName>
    </alternativeName>
    <alternativeName>
        <fullName evidence="3">L-HBsAg</fullName>
        <shortName evidence="3">LHB</shortName>
    </alternativeName>
    <alternativeName>
        <fullName evidence="3">Large S protein</fullName>
    </alternativeName>
    <alternativeName>
        <fullName evidence="3">Large surface protein</fullName>
    </alternativeName>
    <alternativeName>
        <fullName evidence="3">Major surface antigen</fullName>
    </alternativeName>
</protein>
<name>HBSAG_HBVGB</name>
<accession>P87745</accession>
<feature type="initiator methionine" description="Removed; by host" evidence="3">
    <location>
        <position position="1"/>
    </location>
</feature>
<feature type="chain" id="PRO_0000319291" description="Large envelope protein" evidence="3">
    <location>
        <begin position="2"/>
        <end position="389"/>
    </location>
</feature>
<feature type="topological domain" description="Intravirion; in internal conformation" evidence="3">
    <location>
        <begin position="2"/>
        <end position="242"/>
    </location>
</feature>
<feature type="topological domain" description="Virion surface; in external conformation" evidence="3">
    <location>
        <begin position="2"/>
        <end position="170"/>
    </location>
</feature>
<feature type="transmembrane region" description="Helical; Name=TM1; Note=In external conformation" evidence="3">
    <location>
        <begin position="171"/>
        <end position="191"/>
    </location>
</feature>
<feature type="topological domain" description="Intravirion; in external conformation" evidence="3">
    <location>
        <begin position="192"/>
        <end position="242"/>
    </location>
</feature>
<feature type="transmembrane region" description="Helical; Name=TM2" evidence="3">
    <location>
        <begin position="243"/>
        <end position="263"/>
    </location>
</feature>
<feature type="topological domain" description="Virion surface" evidence="3">
    <location>
        <begin position="264"/>
        <end position="337"/>
    </location>
</feature>
<feature type="transmembrane region" description="Helical" evidence="3">
    <location>
        <begin position="338"/>
        <end position="358"/>
    </location>
</feature>
<feature type="topological domain" description="Intravirion" evidence="3">
    <location>
        <begin position="359"/>
        <end position="364"/>
    </location>
</feature>
<feature type="transmembrane region" description="Helical; Name=TM3" evidence="3">
    <location>
        <begin position="365"/>
        <end position="387"/>
    </location>
</feature>
<feature type="topological domain" description="Virion surface" evidence="3">
    <location>
        <begin position="388"/>
        <end position="389"/>
    </location>
</feature>
<feature type="region of interest" description="Pre-S" evidence="3">
    <location>
        <begin position="2"/>
        <end position="163"/>
    </location>
</feature>
<feature type="region of interest" description="Pre-S1" evidence="3">
    <location>
        <begin position="2"/>
        <end position="108"/>
    </location>
</feature>
<feature type="region of interest" description="Disordered" evidence="4">
    <location>
        <begin position="79"/>
        <end position="99"/>
    </location>
</feature>
<feature type="region of interest" description="Pre-S2" evidence="3">
    <location>
        <begin position="109"/>
        <end position="163"/>
    </location>
</feature>
<feature type="lipid moiety-binding region" description="N-myristoyl glycine; by host" evidence="3">
    <location>
        <position position="2"/>
    </location>
</feature>
<feature type="glycosylation site" description="N-linked (GlcNAc...) asparagine; by host" evidence="3">
    <location>
        <position position="309"/>
    </location>
</feature>
<feature type="splice variant" id="VSP_031464" description="In isoform S." evidence="5">
    <location>
        <begin position="1"/>
        <end position="163"/>
    </location>
</feature>
<feature type="splice variant" id="VSP_031465" description="In isoform M." evidence="5">
    <location>
        <begin position="1"/>
        <end position="108"/>
    </location>
</feature>
<feature type="modified residue" description="N-acetylmethionine" evidence="1">
    <location sequence="P87745-2">
        <position position="1"/>
    </location>
</feature>
<sequence>MGQNLSVSNPLGFFPEHQLDPLFKANSNNPDWDFNPNKDNWPEATKVGVGAFGPGFTPPHGGLLGWSSQAQGAITTLPALPPPAATNRQSGRQPTPISPPLRDTHPQAMKWNSTVFHQTLQDPRVRGLYFPVGGSSSGTVNPVPTTASHISSIFSRTGDPAPNMENITSGFLGPLLVLQAGFFLLTKILTIPQSLDSWWTSLNFLGGAPVCPGQNSQSPTSNHSPTSCPPICPGYRWMCLRRFIIFLFILLLCLIFLLVLLDYQGMLPVCPLLPGSSTTSTGPCRTCTITAQGTSLYPSCCCTKPSDGNCTCIPIPSSWAFAKFLWEWASVRFSWLSLLAPFVQWFAGLSPTAWLLVIWMIWYWGPNLYNILNPFIPLLPIFFCLWVYI</sequence>
<gene>
    <name evidence="3" type="primary">S</name>
</gene>
<keyword id="KW-0007">Acetylation</keyword>
<keyword id="KW-0024">Alternative initiation</keyword>
<keyword id="KW-0025">Alternative splicing</keyword>
<keyword id="KW-1166">Caveolin-mediated endocytosis of virus by host</keyword>
<keyword id="KW-1170">Fusion of virus membrane with host endosomal membrane</keyword>
<keyword id="KW-1168">Fusion of virus membrane with host membrane</keyword>
<keyword id="KW-0325">Glycoprotein</keyword>
<keyword id="KW-0945">Host-virus interaction</keyword>
<keyword id="KW-0449">Lipoprotein</keyword>
<keyword id="KW-0472">Membrane</keyword>
<keyword id="KW-0519">Myristate</keyword>
<keyword id="KW-0812">Transmembrane</keyword>
<keyword id="KW-1133">Transmembrane helix</keyword>
<keyword id="KW-1161">Viral attachment to host cell</keyword>
<keyword id="KW-0261">Viral envelope protein</keyword>
<keyword id="KW-1162">Viral penetration into host cytoplasm</keyword>
<keyword id="KW-0946">Virion</keyword>
<keyword id="KW-1164">Virus endocytosis by host</keyword>
<keyword id="KW-1160">Virus entry into host cell</keyword>
<dbReference type="EMBL" id="U46935">
    <property type="protein sequence ID" value="AAB41952.1"/>
    <property type="molecule type" value="Genomic_DNA"/>
</dbReference>
<dbReference type="PIR" id="S67506">
    <property type="entry name" value="S67506"/>
</dbReference>
<dbReference type="SMR" id="P87745"/>
<dbReference type="GlyCosmos" id="P87745">
    <property type="glycosylation" value="1 site, No reported glycans"/>
</dbReference>
<dbReference type="Proteomes" id="UP000007408">
    <property type="component" value="Genome"/>
</dbReference>
<dbReference type="GO" id="GO:0016020">
    <property type="term" value="C:membrane"/>
    <property type="evidence" value="ECO:0007669"/>
    <property type="project" value="UniProtKB-UniRule"/>
</dbReference>
<dbReference type="GO" id="GO:0019031">
    <property type="term" value="C:viral envelope"/>
    <property type="evidence" value="ECO:0007669"/>
    <property type="project" value="UniProtKB-KW"/>
</dbReference>
<dbReference type="GO" id="GO:0055036">
    <property type="term" value="C:virion membrane"/>
    <property type="evidence" value="ECO:0007669"/>
    <property type="project" value="UniProtKB-SubCell"/>
</dbReference>
<dbReference type="GO" id="GO:0075513">
    <property type="term" value="P:caveolin-mediated endocytosis of virus by host cell"/>
    <property type="evidence" value="ECO:0007669"/>
    <property type="project" value="UniProtKB-KW"/>
</dbReference>
<dbReference type="GO" id="GO:0039654">
    <property type="term" value="P:fusion of virus membrane with host endosome membrane"/>
    <property type="evidence" value="ECO:0007669"/>
    <property type="project" value="UniProtKB-KW"/>
</dbReference>
<dbReference type="GO" id="GO:0019062">
    <property type="term" value="P:virion attachment to host cell"/>
    <property type="evidence" value="ECO:0007669"/>
    <property type="project" value="UniProtKB-UniRule"/>
</dbReference>
<dbReference type="HAMAP" id="MF_04075">
    <property type="entry name" value="HBV_HBSAG"/>
    <property type="match status" value="1"/>
</dbReference>
<dbReference type="InterPro" id="IPR000349">
    <property type="entry name" value="HBV_HBSAG"/>
</dbReference>
<dbReference type="Pfam" id="PF00695">
    <property type="entry name" value="vMSA"/>
    <property type="match status" value="1"/>
</dbReference>
<comment type="function">
    <text evidence="3">The large envelope protein exists in two topological conformations, one which is termed 'external' or Le-HBsAg and the other 'internal' or Li-HBsAg. In its external conformation the protein attaches the virus to cell receptors and thereby initiating infection. This interaction determines the species specificity and liver tropism. This attachment induces virion internalization predominantly through caveolin-mediated endocytosis. The large envelope protein also assures fusion between virion membrane and endosomal membrane. In its internal conformation the protein plays a role in virion morphogenesis and mediates the contact with the nucleocapsid like a matrix protein.</text>
</comment>
<comment type="function">
    <text evidence="3">The middle envelope protein plays an important role in the budding of the virion. It is involved in the induction of budding in a nucleocapsid independent way. In this process the majority of envelope proteins bud to form subviral lipoprotein particles of 22 nm of diameter that do not contain a nucleocapsid.</text>
</comment>
<comment type="subunit">
    <molecule>Isoform L</molecule>
    <text evidence="2">In its internal form (Li-HBsAg), interacts with the capsid protein and with the isoform S. Interacts with host chaperone CANX.</text>
</comment>
<comment type="subunit">
    <molecule>Isoform M</molecule>
    <text evidence="2">Associates with host chaperone CANX through its pre-S2 N glycan; this association may be essential for isoform M proper secretion.</text>
</comment>
<comment type="subunit">
    <molecule>Isoform S</molecule>
    <text evidence="2">Interacts with isoform L. Interacts with the antigens of satellite virus HDV (HDVAgs); this interaction is required for encapsidation of HDV genomic RNA.</text>
</comment>
<comment type="subcellular location">
    <subcellularLocation>
        <location evidence="3">Virion membrane</location>
    </subcellularLocation>
</comment>
<comment type="alternative products">
    <event type="alternative splicing"/>
    <event type="alternative initiation"/>
    <isoform>
        <id>P87745-1</id>
        <name>L</name>
        <name>Large envelope protein</name>
        <name>LHB</name>
        <name>L-HBsAg</name>
        <sequence type="displayed"/>
    </isoform>
    <isoform>
        <id>P87745-2</id>
        <name>M</name>
        <name>Middle envelope protein</name>
        <name>MHB</name>
        <name>M-HBsAg</name>
        <sequence type="described" ref="VSP_031465"/>
    </isoform>
    <isoform>
        <id>P87745-3</id>
        <name>S</name>
        <name>Small envelope protein</name>
        <name>SHB</name>
        <name>S-HBsAg</name>
        <sequence type="described" ref="VSP_031464"/>
    </isoform>
</comment>
<comment type="domain">
    <text evidence="3">The large envelope protein is synthesized with the pre-S region at the cytosolic side of the endoplasmic reticulum and, hence will be within the virion after budding. Therefore the pre-S region is not N-glycosylated. Later a post-translational translocation of N-terminal pre-S and TM1 domains occur in about 50% of proteins at the virion surface. These molecules change their topology by an unknown mechanism, resulting in exposure of pre-S region at virion surface. For isoform M in contrast, the pre-S2 region is translocated cotranslationally to the endoplasmic reticulum lumen and is N-glycosylated.</text>
</comment>
<comment type="PTM">
    <text evidence="1 3">Isoform M is N-terminally acetylated by host at a ratio of 90%, and N-glycosylated by host at the pre-S2 region.</text>
</comment>
<comment type="PTM">
    <text evidence="3">Myristoylated.</text>
</comment>
<comment type="similarity">
    <text evidence="3">Belongs to the orthohepadnavirus major surface antigen family.</text>
</comment>
<proteinExistence type="inferred from homology"/>
<reference key="1">
    <citation type="journal article" date="1996" name="Virology">
        <title>Complete sequencing of a gibbon hepatitis B virus genome reveals a unique genotype distantly related to the chimpanzee hepatitis B virus.</title>
        <authorList>
            <person name="Norder H."/>
            <person name="Ebert J.W."/>
            <person name="Fields H.A."/>
            <person name="Mushahwar I.K."/>
            <person name="Magnius L.O."/>
        </authorList>
    </citation>
    <scope>NUCLEOTIDE SEQUENCE [GENOMIC DNA]</scope>
</reference>
<reference key="2">
    <citation type="journal article" date="1996" name="Intervirology">
        <title>Functions of the large hepatitis B virus surface protein in viral particle morphogenesis.</title>
        <authorList>
            <person name="Bruss V."/>
            <person name="Gerhardt E."/>
            <person name="Vieluf K."/>
            <person name="Wunderlich G."/>
        </authorList>
    </citation>
    <scope>REVIEW</scope>
</reference>
<reference key="3">
    <citation type="journal article" date="1998" name="Adv. Exp. Med. Biol.">
        <title>Role of glycan processing in hepatitis B virus envelope protein trafficking.</title>
        <authorList>
            <person name="Block T.M."/>
            <person name="Lu X."/>
            <person name="Mehta A."/>
            <person name="Park J."/>
            <person name="Blumberg B.S."/>
            <person name="Dwek R."/>
        </authorList>
    </citation>
    <scope>REVIEW</scope>
</reference>
<reference key="4">
    <citation type="journal article" date="2004" name="Virus Res.">
        <title>Envelopment of the hepatitis B virus nucleocapsid.</title>
        <authorList>
            <person name="Bruss V."/>
        </authorList>
    </citation>
    <scope>REVIEW</scope>
</reference>
<reference key="5">
    <citation type="journal article" date="2006" name="Cancer Sci.">
        <title>Hepatitis B virus pre-S mutants, endoplasmic reticulum stress and hepatocarcinogenesis.</title>
        <authorList>
            <person name="Wang H.C."/>
            <person name="Huang W."/>
            <person name="Lai M.D."/>
            <person name="Su I.J."/>
        </authorList>
    </citation>
    <scope>REVIEW</scope>
</reference>
<evidence type="ECO:0000250" key="1">
    <source>
        <dbReference type="UniProtKB" id="P03138"/>
    </source>
</evidence>
<evidence type="ECO:0000250" key="2">
    <source>
        <dbReference type="UniProtKB" id="P03141"/>
    </source>
</evidence>
<evidence type="ECO:0000255" key="3">
    <source>
        <dbReference type="HAMAP-Rule" id="MF_04075"/>
    </source>
</evidence>
<evidence type="ECO:0000256" key="4">
    <source>
        <dbReference type="SAM" id="MobiDB-lite"/>
    </source>
</evidence>
<evidence type="ECO:0000305" key="5"/>
<organismHost>
    <name type="scientific">Hylobatidae</name>
    <name type="common">gibbons</name>
    <dbReference type="NCBI Taxonomy" id="9577"/>
</organismHost>
<organism>
    <name type="scientific">Gibbon hepatitis B virus subtype ayw3q (isolate Hope)</name>
    <name type="common">HBVgbn</name>
    <dbReference type="NCBI Taxonomy" id="489544"/>
    <lineage>
        <taxon>Viruses</taxon>
        <taxon>Riboviria</taxon>
        <taxon>Pararnavirae</taxon>
        <taxon>Artverviricota</taxon>
        <taxon>Revtraviricetes</taxon>
        <taxon>Blubervirales</taxon>
        <taxon>Hepadnaviridae</taxon>
        <taxon>Orthohepadnavirus</taxon>
        <taxon>Hepatitis B virus</taxon>
    </lineage>
</organism>